<keyword id="KW-0929">Antimicrobial</keyword>
<keyword id="KW-0106">Calcium</keyword>
<keyword id="KW-0963">Cytoplasm</keyword>
<keyword id="KW-1015">Disulfide bond</keyword>
<keyword id="KW-0325">Glycoprotein</keyword>
<keyword id="KW-0349">Heme</keyword>
<keyword id="KW-0408">Iron</keyword>
<keyword id="KW-0479">Metal-binding</keyword>
<keyword id="KW-0944">Nitration</keyword>
<keyword id="KW-0560">Oxidoreductase</keyword>
<keyword id="KW-0575">Peroxidase</keyword>
<keyword id="KW-0597">Phosphoprotein</keyword>
<keyword id="KW-1185">Reference proteome</keyword>
<keyword id="KW-0964">Secreted</keyword>
<keyword id="KW-0732">Signal</keyword>
<evidence type="ECO:0000250" key="1">
    <source>
        <dbReference type="UniProtKB" id="P11678"/>
    </source>
</evidence>
<evidence type="ECO:0000250" key="2">
    <source>
        <dbReference type="UniProtKB" id="P22079"/>
    </source>
</evidence>
<evidence type="ECO:0000250" key="3">
    <source>
        <dbReference type="UniProtKB" id="P80025"/>
    </source>
</evidence>
<evidence type="ECO:0000250" key="4">
    <source>
        <dbReference type="UniProtKB" id="Q5SW46"/>
    </source>
</evidence>
<evidence type="ECO:0000255" key="5"/>
<evidence type="ECO:0000255" key="6">
    <source>
        <dbReference type="PROSITE-ProRule" id="PRU00298"/>
    </source>
</evidence>
<evidence type="ECO:0000269" key="7">
    <source>
    </source>
</evidence>
<evidence type="ECO:0000303" key="8">
    <source>
    </source>
</evidence>
<evidence type="ECO:0000303" key="9">
    <source ref="1"/>
</evidence>
<evidence type="ECO:0000305" key="10"/>
<gene>
    <name type="primary">LPO</name>
</gene>
<feature type="signal peptide" evidence="5">
    <location>
        <begin position="1"/>
        <end position="22"/>
    </location>
</feature>
<feature type="propeptide" id="PRO_0000433299" evidence="3">
    <location>
        <begin position="23"/>
        <end position="98"/>
    </location>
</feature>
<feature type="chain" id="PRO_0000433300" description="Lactoperoxidase" evidence="3">
    <location>
        <begin position="99"/>
        <end position="710"/>
    </location>
</feature>
<feature type="active site" description="Proton acceptor" evidence="6">
    <location>
        <position position="224"/>
    </location>
</feature>
<feature type="binding site" description="covalent" evidence="6">
    <location>
        <position position="223"/>
    </location>
    <ligand>
        <name>heme b</name>
        <dbReference type="ChEBI" id="CHEBI:60344"/>
    </ligand>
</feature>
<feature type="binding site" evidence="6">
    <location>
        <position position="225"/>
    </location>
    <ligand>
        <name>Ca(2+)</name>
        <dbReference type="ChEBI" id="CHEBI:29108"/>
    </ligand>
</feature>
<feature type="binding site" evidence="6">
    <location>
        <position position="299"/>
    </location>
    <ligand>
        <name>Ca(2+)</name>
        <dbReference type="ChEBI" id="CHEBI:29108"/>
    </ligand>
</feature>
<feature type="binding site" evidence="6">
    <location>
        <position position="301"/>
    </location>
    <ligand>
        <name>Ca(2+)</name>
        <dbReference type="ChEBI" id="CHEBI:29108"/>
    </ligand>
</feature>
<feature type="binding site" evidence="6">
    <location>
        <position position="303"/>
    </location>
    <ligand>
        <name>Ca(2+)</name>
        <dbReference type="ChEBI" id="CHEBI:29108"/>
    </ligand>
</feature>
<feature type="binding site" evidence="6">
    <location>
        <position position="305"/>
    </location>
    <ligand>
        <name>Ca(2+)</name>
        <dbReference type="ChEBI" id="CHEBI:29108"/>
    </ligand>
</feature>
<feature type="binding site" description="covalent" evidence="6">
    <location>
        <position position="373"/>
    </location>
    <ligand>
        <name>heme b</name>
        <dbReference type="ChEBI" id="CHEBI:60344"/>
    </ligand>
</feature>
<feature type="binding site" description="axial binding residue" evidence="6">
    <location>
        <position position="466"/>
    </location>
    <ligand>
        <name>heme b</name>
        <dbReference type="ChEBI" id="CHEBI:60344"/>
    </ligand>
    <ligandPart>
        <name>Fe</name>
        <dbReference type="ChEBI" id="CHEBI:18248"/>
    </ligandPart>
</feature>
<feature type="site" description="Transition state stabilizer" evidence="6">
    <location>
        <position position="370"/>
    </location>
</feature>
<feature type="modified residue" description="Phosphoserine" evidence="3">
    <location>
        <position position="313"/>
    </location>
</feature>
<feature type="modified residue" description="3'-nitrotyrosine" evidence="1">
    <location>
        <position position="480"/>
    </location>
</feature>
<feature type="glycosylation site" description="N-linked (GlcNAc...) asparagine" evidence="5">
    <location>
        <position position="25"/>
    </location>
</feature>
<feature type="glycosylation site" description="N-linked (GlcNAc...) asparagine" evidence="5">
    <location>
        <position position="104"/>
    </location>
</feature>
<feature type="glycosylation site" description="N-linked (GlcNAc...) asparagine" evidence="5">
    <location>
        <position position="131"/>
    </location>
</feature>
<feature type="glycosylation site" description="N-linked (GlcNAc...) asparagine" evidence="5">
    <location>
        <position position="238"/>
    </location>
</feature>
<feature type="glycosylation site" description="N-linked (GlcNAc...) asparagine" evidence="5">
    <location>
        <position position="320"/>
    </location>
</feature>
<feature type="disulfide bond" evidence="6">
    <location>
        <begin position="130"/>
        <end position="143"/>
    </location>
</feature>
<feature type="disulfide bond" evidence="6">
    <location>
        <begin position="244"/>
        <end position="254"/>
    </location>
</feature>
<feature type="disulfide bond" evidence="6">
    <location>
        <begin position="248"/>
        <end position="272"/>
    </location>
</feature>
<feature type="disulfide bond" evidence="6">
    <location>
        <begin position="352"/>
        <end position="363"/>
    </location>
</feature>
<feature type="disulfide bond" evidence="6">
    <location>
        <begin position="571"/>
        <end position="628"/>
    </location>
</feature>
<feature type="disulfide bond" evidence="6">
    <location>
        <begin position="669"/>
        <end position="694"/>
    </location>
</feature>
<accession>Q8R481</accession>
<sequence>MKVLLRLPALLASLTLLQMAASTRNATRTATIRETVDEVKVQVNKAFLDSRDRLKTDMSNLAPTVRHLSGYLKQAKGRTRTAIRVGQVWEQSLKRLRRMVPLTNVTGQGLDLTSLSWEVGCGHPAPTVTCNISNPYRTITGDCNNRKNPELGSANRALARWLPAEYEDGLSLPFGWTPGKTRNGFPLPQPRDVSNQVLDYLNEEEILDQNRSLLFMQWGQIVDHDLDFAPETEMGSDNYSKAQCDELCIQGDNCFPIMFPKGDPKLKTQGKCLPFFRAGFVCPTSPYQSLAREQINALTSFMDASMVYGSEPSLANRLRNLSSPLGLMAVNEEVSDHGRPLLPFVNVKPSPCEVINRTAGVPCFLAGDSRASEQILLATSHTLFLREHNRLARELSRLNPQWDGEKLYQEARRIMGALIQIITFRDYLPILLGDELQKWIPPYQGYKETVDPRISNVFTFAFRFGHLEVPSTVSRLDENYQPWGSEPELPLHKLFFNTWRVVKDGGIDPLVRGLLAKKAKLAHQDKMMTGELRNMLFQPNHTVHGFDLAAINIQRCRDHGQPGYNSWRAFCGLSQPKTLEELSAVLRNEVLAKKLMDLYGTPDNIDIWLGAIAEPLVRRGRVGPLLTCLLGQQFQRIRDGDRFWWENPGVFTEKQRDSLQKMSFSRLVCDNTGINKVPLNPFQPNSYPHSFVDCSAIEKLDLTPWASVKK</sequence>
<dbReference type="EC" id="1.11.1.7" evidence="3"/>
<dbReference type="EMBL" id="AF498045">
    <property type="protein sequence ID" value="AAM15535.1"/>
    <property type="molecule type" value="mRNA"/>
</dbReference>
<dbReference type="RefSeq" id="NP_001268330.1">
    <property type="nucleotide sequence ID" value="NM_001281401.1"/>
</dbReference>
<dbReference type="SMR" id="Q8R481"/>
<dbReference type="STRING" id="10036.ENSMAUP00000025391"/>
<dbReference type="PeroxiBase" id="4045">
    <property type="entry name" value="MauLPO"/>
</dbReference>
<dbReference type="GlyCosmos" id="Q8R481">
    <property type="glycosylation" value="5 sites, No reported glycans"/>
</dbReference>
<dbReference type="Ensembl" id="ENSMAUT00000029413">
    <property type="protein sequence ID" value="ENSMAUP00000025391"/>
    <property type="gene ID" value="ENSMAUG00000021948"/>
</dbReference>
<dbReference type="GeneID" id="101830444"/>
<dbReference type="KEGG" id="maua:101830444"/>
<dbReference type="CTD" id="4025"/>
<dbReference type="eggNOG" id="KOG2408">
    <property type="taxonomic scope" value="Eukaryota"/>
</dbReference>
<dbReference type="OrthoDB" id="823504at2759"/>
<dbReference type="Proteomes" id="UP000189706">
    <property type="component" value="Unplaced"/>
</dbReference>
<dbReference type="GO" id="GO:0016323">
    <property type="term" value="C:basolateral plasma membrane"/>
    <property type="evidence" value="ECO:0007669"/>
    <property type="project" value="Ensembl"/>
</dbReference>
<dbReference type="GO" id="GO:0005737">
    <property type="term" value="C:cytoplasm"/>
    <property type="evidence" value="ECO:0007669"/>
    <property type="project" value="UniProtKB-SubCell"/>
</dbReference>
<dbReference type="GO" id="GO:0005615">
    <property type="term" value="C:extracellular space"/>
    <property type="evidence" value="ECO:0000314"/>
    <property type="project" value="UniProtKB"/>
</dbReference>
<dbReference type="GO" id="GO:0020037">
    <property type="term" value="F:heme binding"/>
    <property type="evidence" value="ECO:0007669"/>
    <property type="project" value="InterPro"/>
</dbReference>
<dbReference type="GO" id="GO:0140825">
    <property type="term" value="F:lactoperoxidase activity"/>
    <property type="evidence" value="ECO:0007669"/>
    <property type="project" value="UniProtKB-EC"/>
</dbReference>
<dbReference type="GO" id="GO:0046872">
    <property type="term" value="F:metal ion binding"/>
    <property type="evidence" value="ECO:0007669"/>
    <property type="project" value="UniProtKB-KW"/>
</dbReference>
<dbReference type="GO" id="GO:0004601">
    <property type="term" value="F:peroxidase activity"/>
    <property type="evidence" value="ECO:0000250"/>
    <property type="project" value="UniProtKB"/>
</dbReference>
<dbReference type="GO" id="GO:0036393">
    <property type="term" value="F:thiocyanate peroxidase activity"/>
    <property type="evidence" value="ECO:0000250"/>
    <property type="project" value="UniProtKB"/>
</dbReference>
<dbReference type="GO" id="GO:0042742">
    <property type="term" value="P:defense response to bacterium"/>
    <property type="evidence" value="ECO:0007669"/>
    <property type="project" value="Ensembl"/>
</dbReference>
<dbReference type="GO" id="GO:0001580">
    <property type="term" value="P:detection of chemical stimulus involved in sensory perception of bitter taste"/>
    <property type="evidence" value="ECO:0007669"/>
    <property type="project" value="Ensembl"/>
</dbReference>
<dbReference type="GO" id="GO:0006979">
    <property type="term" value="P:response to oxidative stress"/>
    <property type="evidence" value="ECO:0007669"/>
    <property type="project" value="InterPro"/>
</dbReference>
<dbReference type="CDD" id="cd09824">
    <property type="entry name" value="myeloperoxidase_like"/>
    <property type="match status" value="1"/>
</dbReference>
<dbReference type="FunFam" id="1.10.640.10:FF:000001">
    <property type="entry name" value="Peroxidasin homolog"/>
    <property type="match status" value="1"/>
</dbReference>
<dbReference type="Gene3D" id="1.10.640.10">
    <property type="entry name" value="Haem peroxidase domain superfamily, animal type"/>
    <property type="match status" value="1"/>
</dbReference>
<dbReference type="InterPro" id="IPR019791">
    <property type="entry name" value="Haem_peroxidase_animal"/>
</dbReference>
<dbReference type="InterPro" id="IPR010255">
    <property type="entry name" value="Haem_peroxidase_sf"/>
</dbReference>
<dbReference type="InterPro" id="IPR037120">
    <property type="entry name" value="Haem_peroxidase_sf_animal"/>
</dbReference>
<dbReference type="PANTHER" id="PTHR11475:SF67">
    <property type="entry name" value="LACTOPEROXIDASE"/>
    <property type="match status" value="1"/>
</dbReference>
<dbReference type="PANTHER" id="PTHR11475">
    <property type="entry name" value="OXIDASE/PEROXIDASE"/>
    <property type="match status" value="1"/>
</dbReference>
<dbReference type="Pfam" id="PF03098">
    <property type="entry name" value="An_peroxidase"/>
    <property type="match status" value="1"/>
</dbReference>
<dbReference type="PRINTS" id="PR00457">
    <property type="entry name" value="ANPEROXIDASE"/>
</dbReference>
<dbReference type="SUPFAM" id="SSF48113">
    <property type="entry name" value="Heme-dependent peroxidases"/>
    <property type="match status" value="1"/>
</dbReference>
<dbReference type="PROSITE" id="PS50292">
    <property type="entry name" value="PEROXIDASE_3"/>
    <property type="match status" value="1"/>
</dbReference>
<organism>
    <name type="scientific">Mesocricetus auratus</name>
    <name type="common">Golden hamster</name>
    <dbReference type="NCBI Taxonomy" id="10036"/>
    <lineage>
        <taxon>Eukaryota</taxon>
        <taxon>Metazoa</taxon>
        <taxon>Chordata</taxon>
        <taxon>Craniata</taxon>
        <taxon>Vertebrata</taxon>
        <taxon>Euteleostomi</taxon>
        <taxon>Mammalia</taxon>
        <taxon>Eutheria</taxon>
        <taxon>Euarchontoglires</taxon>
        <taxon>Glires</taxon>
        <taxon>Rodentia</taxon>
        <taxon>Myomorpha</taxon>
        <taxon>Muroidea</taxon>
        <taxon>Cricetidae</taxon>
        <taxon>Cricetinae</taxon>
        <taxon>Mesocricetus</taxon>
    </lineage>
</organism>
<name>PERL_MESAU</name>
<protein>
    <recommendedName>
        <fullName evidence="9">Lactoperoxidase</fullName>
        <shortName evidence="9">LPO</shortName>
        <ecNumber evidence="3">1.11.1.7</ecNumber>
    </recommendedName>
    <alternativeName>
        <fullName evidence="8">Lacrimal gland peroxidase</fullName>
    </alternativeName>
</protein>
<reference key="1">
    <citation type="submission" date="2002-03" db="EMBL/GenBank/DDBJ databases">
        <title>cDNA cloning and regulation of a lactoperoxidase (LPO) from hamster lacrimal gland.</title>
        <authorList>
            <person name="Paliwal A."/>
            <person name="Srikantan S."/>
            <person name="De P.K."/>
        </authorList>
    </citation>
    <scope>NUCLEOTIDE SEQUENCE [MRNA]</scope>
    <source>
        <tissue>Lacrimal gland</tissue>
    </source>
</reference>
<reference key="2">
    <citation type="journal article" date="2006" name="Biochem. Biophys. Res. Commun.">
        <title>Marked sexual dimorphism of lacrimal gland peroxidase in hamster: repression by androgens and estrogens.</title>
        <authorList>
            <person name="Paliwal A."/>
            <person name="De P.K."/>
        </authorList>
    </citation>
    <scope>SUBCELLULAR LOCATION</scope>
    <scope>TISSUE SPECIFICITY</scope>
    <scope>INDUCTION</scope>
    <source>
        <tissue>Lacrimal gland</tissue>
    </source>
</reference>
<comment type="function">
    <text evidence="2 3 4">Heme-containing oxidoreductase which catalyzes the conversion of thiocyanate (SCN(-)) into antimicrobial agent hypothiocyanous acid (OSCN(-)) in the presence of hydrogen peroxide (H2O2). Also involved in the conversion of iodide (I(-)) into hypoiodite (IO(-)) in the presence of H2O2 (By similarity). Responsible for the inactivation of a wide range of micro-organisms and hence, important component of defense mechanism. May be implicated in airway host defense against infection (By similarity). May contribute to maintaining an appropriate H2O2 cellular level, therefore protecting cells from H2O2-caused injuries and inflammation (By similarity).</text>
</comment>
<comment type="catalytic activity">
    <reaction evidence="3">
        <text>2 a phenolic donor + H2O2 = 2 a phenolic radical donor + 2 H2O</text>
        <dbReference type="Rhea" id="RHEA:56136"/>
        <dbReference type="ChEBI" id="CHEBI:15377"/>
        <dbReference type="ChEBI" id="CHEBI:16240"/>
        <dbReference type="ChEBI" id="CHEBI:139520"/>
        <dbReference type="ChEBI" id="CHEBI:139521"/>
        <dbReference type="EC" id="1.11.1.7"/>
    </reaction>
    <physiologicalReaction direction="left-to-right" evidence="3">
        <dbReference type="Rhea" id="RHEA:56137"/>
    </physiologicalReaction>
</comment>
<comment type="catalytic activity">
    <reaction evidence="3">
        <text>thiocyanate + H2O2 + H(+) = hypothiocyanous acid + H2O</text>
        <dbReference type="Rhea" id="RHEA:69416"/>
        <dbReference type="ChEBI" id="CHEBI:15377"/>
        <dbReference type="ChEBI" id="CHEBI:15378"/>
        <dbReference type="ChEBI" id="CHEBI:16240"/>
        <dbReference type="ChEBI" id="CHEBI:18022"/>
        <dbReference type="ChEBI" id="CHEBI:133907"/>
    </reaction>
    <physiologicalReaction direction="left-to-right" evidence="3">
        <dbReference type="Rhea" id="RHEA:69417"/>
    </physiologicalReaction>
</comment>
<comment type="catalytic activity">
    <reaction evidence="3">
        <text>iodide + H2O2 = hypoiodite + H2O</text>
        <dbReference type="Rhea" id="RHEA:69420"/>
        <dbReference type="ChEBI" id="CHEBI:15377"/>
        <dbReference type="ChEBI" id="CHEBI:16240"/>
        <dbReference type="ChEBI" id="CHEBI:16382"/>
        <dbReference type="ChEBI" id="CHEBI:29232"/>
    </reaction>
    <physiologicalReaction direction="left-to-right" evidence="3">
        <dbReference type="Rhea" id="RHEA:69421"/>
    </physiologicalReaction>
</comment>
<comment type="cofactor">
    <cofactor evidence="6">
        <name>Ca(2+)</name>
        <dbReference type="ChEBI" id="CHEBI:29108"/>
    </cofactor>
    <text evidence="6">Binds 1 Ca(2+) ion per heterodimer.</text>
</comment>
<comment type="cofactor">
    <cofactor evidence="6">
        <name>heme b</name>
        <dbReference type="ChEBI" id="CHEBI:60344"/>
    </cofactor>
    <text evidence="6">Binds 1 heme b (iron(II)-protoporphyrin IX) group covalently per heterodimer.</text>
</comment>
<comment type="subcellular location">
    <subcellularLocation>
        <location evidence="7">Secreted</location>
    </subcellularLocation>
    <subcellularLocation>
        <location evidence="4">Cytoplasm</location>
    </subcellularLocation>
    <text evidence="7">Secreted by the lacrimal gland into tears.</text>
</comment>
<comment type="tissue specificity">
    <text evidence="7">Expressed in the lacrimal gland with higher levels and 3-fold higher activity in adult females than males and secreted into tears (at protein level).</text>
</comment>
<comment type="induction">
    <text evidence="7">Repressed by the androgen dihydrotestosterone (DHT) and the estrogen estradiol (E2) (at protein level).</text>
</comment>
<comment type="miscellaneous">
    <text evidence="3">Thiocyanate (SCN(-)) and hypothiocyanite (OSCN(-)) are bound in the distal heme cavity. The iodide ion (I(-)) occupies a position which is stabilized by the interactions with heme moiety, His-224, Arg-370 and Glu-373. Hydrogen peroxide is held between the heme iron and His-224.</text>
</comment>
<comment type="similarity">
    <text evidence="10">Belongs to the peroxidase family. XPO subfamily.</text>
</comment>
<proteinExistence type="evidence at protein level"/>